<proteinExistence type="predicted"/>
<keyword id="KW-1185">Reference proteome</keyword>
<keyword id="KW-0749">Sporulation</keyword>
<feature type="chain" id="PRO_0000049546" description="Uncharacterized protein YgxB">
    <location>
        <begin position="1"/>
        <end position="552"/>
    </location>
</feature>
<protein>
    <recommendedName>
        <fullName>Uncharacterized protein YgxB</fullName>
    </recommendedName>
    <alternativeName>
        <fullName>ORF1</fullName>
    </alternativeName>
</protein>
<sequence length="552" mass="59970">MYEPARQKMIVSLGQEKIPPAHSSVCLLDKWVNTHHTTKKERYQLNVADVFSSYLSKLPNVIIALLVLLIGWAIAKIIEKAVYKGLSKTKIDDKLFAGKKPSRYSSEKVISKVVYFIALIIVFILFFNILHLTTVASPFVSMLSAIAAAIPSVLKAGLILLLGWAAASVLSFLVKKIGMKLNTSDKLRKWNLVSEGKDIHQAVNTASQIVFYLVLLVFLPGVLSSLKISGISGPFTNMMESVLAFLPKLFAAALIVLIGWLVARLVRDIITNFLASIGTERFAARMGLSIYLKDTSLSAVIGTIAYVLIMIPVVISALDQLDVAGISKPAVSMLNTILNMLPNIMIAIVLVLAGIWAGKWVKSMVSGLLHRAGFDSVLGKMGMEAGTPAKLSLSQVVGMIAQIIVILLFTAEALQIVRLHFLVEIATGIIAYLPNVLVAVFILGLGLYAGELVRKVLASMIKGQEFKSLAPIAKYTIIALAFFMALDQLGVAATIVNSAFIIVLSGFALAFGLSFGLGGKDFASRYLSTFERKMQNTEIEKNRKNQNPPNDM</sequence>
<organism>
    <name type="scientific">Bacillus subtilis (strain 168)</name>
    <dbReference type="NCBI Taxonomy" id="224308"/>
    <lineage>
        <taxon>Bacteria</taxon>
        <taxon>Bacillati</taxon>
        <taxon>Bacillota</taxon>
        <taxon>Bacilli</taxon>
        <taxon>Bacillales</taxon>
        <taxon>Bacillaceae</taxon>
        <taxon>Bacillus</taxon>
    </lineage>
</organism>
<name>YGXB_BACSU</name>
<accession>P37874</accession>
<reference key="1">
    <citation type="journal article" date="1998" name="Microbiology">
        <title>The 172 kb prkA-addAB region from 83 degrees to 97 degrees of the Bacillus subtilis chromosome contains several dysfunctional genes, the glyB marker, many genes encoding transporter proteins, and the ubiquitous hit gene.</title>
        <authorList>
            <person name="Noback M.A."/>
            <person name="Holsappel S."/>
            <person name="Kiewiet R."/>
            <person name="Terpstra P."/>
            <person name="Wambutt R."/>
            <person name="Wedler H."/>
            <person name="Venema G."/>
            <person name="Bron S."/>
        </authorList>
    </citation>
    <scope>NUCLEOTIDE SEQUENCE [GENOMIC DNA]</scope>
    <source>
        <strain>168</strain>
    </source>
</reference>
<reference key="2">
    <citation type="journal article" date="1997" name="Nature">
        <title>The complete genome sequence of the Gram-positive bacterium Bacillus subtilis.</title>
        <authorList>
            <person name="Kunst F."/>
            <person name="Ogasawara N."/>
            <person name="Moszer I."/>
            <person name="Albertini A.M."/>
            <person name="Alloni G."/>
            <person name="Azevedo V."/>
            <person name="Bertero M.G."/>
            <person name="Bessieres P."/>
            <person name="Bolotin A."/>
            <person name="Borchert S."/>
            <person name="Borriss R."/>
            <person name="Boursier L."/>
            <person name="Brans A."/>
            <person name="Braun M."/>
            <person name="Brignell S.C."/>
            <person name="Bron S."/>
            <person name="Brouillet S."/>
            <person name="Bruschi C.V."/>
            <person name="Caldwell B."/>
            <person name="Capuano V."/>
            <person name="Carter N.M."/>
            <person name="Choi S.-K."/>
            <person name="Codani J.-J."/>
            <person name="Connerton I.F."/>
            <person name="Cummings N.J."/>
            <person name="Daniel R.A."/>
            <person name="Denizot F."/>
            <person name="Devine K.M."/>
            <person name="Duesterhoeft A."/>
            <person name="Ehrlich S.D."/>
            <person name="Emmerson P.T."/>
            <person name="Entian K.-D."/>
            <person name="Errington J."/>
            <person name="Fabret C."/>
            <person name="Ferrari E."/>
            <person name="Foulger D."/>
            <person name="Fritz C."/>
            <person name="Fujita M."/>
            <person name="Fujita Y."/>
            <person name="Fuma S."/>
            <person name="Galizzi A."/>
            <person name="Galleron N."/>
            <person name="Ghim S.-Y."/>
            <person name="Glaser P."/>
            <person name="Goffeau A."/>
            <person name="Golightly E.J."/>
            <person name="Grandi G."/>
            <person name="Guiseppi G."/>
            <person name="Guy B.J."/>
            <person name="Haga K."/>
            <person name="Haiech J."/>
            <person name="Harwood C.R."/>
            <person name="Henaut A."/>
            <person name="Hilbert H."/>
            <person name="Holsappel S."/>
            <person name="Hosono S."/>
            <person name="Hullo M.-F."/>
            <person name="Itaya M."/>
            <person name="Jones L.-M."/>
            <person name="Joris B."/>
            <person name="Karamata D."/>
            <person name="Kasahara Y."/>
            <person name="Klaerr-Blanchard M."/>
            <person name="Klein C."/>
            <person name="Kobayashi Y."/>
            <person name="Koetter P."/>
            <person name="Koningstein G."/>
            <person name="Krogh S."/>
            <person name="Kumano M."/>
            <person name="Kurita K."/>
            <person name="Lapidus A."/>
            <person name="Lardinois S."/>
            <person name="Lauber J."/>
            <person name="Lazarevic V."/>
            <person name="Lee S.-M."/>
            <person name="Levine A."/>
            <person name="Liu H."/>
            <person name="Masuda S."/>
            <person name="Mauel C."/>
            <person name="Medigue C."/>
            <person name="Medina N."/>
            <person name="Mellado R.P."/>
            <person name="Mizuno M."/>
            <person name="Moestl D."/>
            <person name="Nakai S."/>
            <person name="Noback M."/>
            <person name="Noone D."/>
            <person name="O'Reilly M."/>
            <person name="Ogawa K."/>
            <person name="Ogiwara A."/>
            <person name="Oudega B."/>
            <person name="Park S.-H."/>
            <person name="Parro V."/>
            <person name="Pohl T.M."/>
            <person name="Portetelle D."/>
            <person name="Porwollik S."/>
            <person name="Prescott A.M."/>
            <person name="Presecan E."/>
            <person name="Pujic P."/>
            <person name="Purnelle B."/>
            <person name="Rapoport G."/>
            <person name="Rey M."/>
            <person name="Reynolds S."/>
            <person name="Rieger M."/>
            <person name="Rivolta C."/>
            <person name="Rocha E."/>
            <person name="Roche B."/>
            <person name="Rose M."/>
            <person name="Sadaie Y."/>
            <person name="Sato T."/>
            <person name="Scanlan E."/>
            <person name="Schleich S."/>
            <person name="Schroeter R."/>
            <person name="Scoffone F."/>
            <person name="Sekiguchi J."/>
            <person name="Sekowska A."/>
            <person name="Seror S.J."/>
            <person name="Serror P."/>
            <person name="Shin B.-S."/>
            <person name="Soldo B."/>
            <person name="Sorokin A."/>
            <person name="Tacconi E."/>
            <person name="Takagi T."/>
            <person name="Takahashi H."/>
            <person name="Takemaru K."/>
            <person name="Takeuchi M."/>
            <person name="Tamakoshi A."/>
            <person name="Tanaka T."/>
            <person name="Terpstra P."/>
            <person name="Tognoni A."/>
            <person name="Tosato V."/>
            <person name="Uchiyama S."/>
            <person name="Vandenbol M."/>
            <person name="Vannier F."/>
            <person name="Vassarotti A."/>
            <person name="Viari A."/>
            <person name="Wambutt R."/>
            <person name="Wedler E."/>
            <person name="Wedler H."/>
            <person name="Weitzenegger T."/>
            <person name="Winters P."/>
            <person name="Wipat A."/>
            <person name="Yamamoto H."/>
            <person name="Yamane K."/>
            <person name="Yasumoto K."/>
            <person name="Yata K."/>
            <person name="Yoshida K."/>
            <person name="Yoshikawa H.-F."/>
            <person name="Zumstein E."/>
            <person name="Yoshikawa H."/>
            <person name="Danchin A."/>
        </authorList>
    </citation>
    <scope>NUCLEOTIDE SEQUENCE [LARGE SCALE GENOMIC DNA]</scope>
    <source>
        <strain>168</strain>
    </source>
</reference>
<reference key="3">
    <citation type="journal article" date="1994" name="J. Bacteriol.">
        <title>Cloning and characterization of spoVR, a gene from Bacillus subtilis involved in spore cortex formation.</title>
        <authorList>
            <person name="Beall B.W."/>
            <person name="Moran C.P. Jr."/>
        </authorList>
    </citation>
    <scope>NUCLEOTIDE SEQUENCE [GENOMIC DNA] OF 1-269</scope>
    <source>
        <strain>168 / Marburg / ATCC 6051 / DSM 10 / JCM 1465 / NBRC 13719 / NCIMB 3610 / NRRL NRS-744 / VKM B-501</strain>
    </source>
</reference>
<dbReference type="EMBL" id="Y14082">
    <property type="protein sequence ID" value="CAA74484.1"/>
    <property type="molecule type" value="Genomic_DNA"/>
</dbReference>
<dbReference type="EMBL" id="AL009126">
    <property type="protein sequence ID" value="CAB12778.1"/>
    <property type="molecule type" value="Genomic_DNA"/>
</dbReference>
<dbReference type="EMBL" id="L26337">
    <property type="protein sequence ID" value="AAA22810.1"/>
    <property type="molecule type" value="Genomic_DNA"/>
</dbReference>
<dbReference type="PIR" id="F69817">
    <property type="entry name" value="F69817"/>
</dbReference>
<dbReference type="RefSeq" id="NP_388820.1">
    <property type="nucleotide sequence ID" value="NC_000964.3"/>
</dbReference>
<dbReference type="RefSeq" id="WP_010886457.1">
    <property type="nucleotide sequence ID" value="NZ_OZ025638.1"/>
</dbReference>
<dbReference type="FunCoup" id="P37874">
    <property type="interactions" value="21"/>
</dbReference>
<dbReference type="STRING" id="224308.BSU09390"/>
<dbReference type="PaxDb" id="224308-BSU09390"/>
<dbReference type="EnsemblBacteria" id="CAB12778">
    <property type="protein sequence ID" value="CAB12778"/>
    <property type="gene ID" value="BSU_09390"/>
</dbReference>
<dbReference type="GeneID" id="936263"/>
<dbReference type="KEGG" id="bsu:BSU09390"/>
<dbReference type="PATRIC" id="fig|224308.43.peg.981"/>
<dbReference type="eggNOG" id="COG0668">
    <property type="taxonomic scope" value="Bacteria"/>
</dbReference>
<dbReference type="InParanoid" id="P37874"/>
<dbReference type="OrthoDB" id="1411407at2"/>
<dbReference type="BioCyc" id="BSUB:BSU09390-MONOMER"/>
<dbReference type="Proteomes" id="UP000001570">
    <property type="component" value="Chromosome"/>
</dbReference>
<dbReference type="GO" id="GO:0008381">
    <property type="term" value="F:mechanosensitive monoatomic ion channel activity"/>
    <property type="evidence" value="ECO:0007669"/>
    <property type="project" value="InterPro"/>
</dbReference>
<dbReference type="GO" id="GO:0030435">
    <property type="term" value="P:sporulation resulting in formation of a cellular spore"/>
    <property type="evidence" value="ECO:0007669"/>
    <property type="project" value="UniProtKB-KW"/>
</dbReference>
<dbReference type="Gene3D" id="1.10.287.1260">
    <property type="match status" value="3"/>
</dbReference>
<dbReference type="InterPro" id="IPR008910">
    <property type="entry name" value="MSC_TM_helix"/>
</dbReference>
<dbReference type="InterPro" id="IPR045275">
    <property type="entry name" value="MscS_archaea/bacteria_type"/>
</dbReference>
<dbReference type="NCBIfam" id="NF033912">
    <property type="entry name" value="msc"/>
    <property type="match status" value="1"/>
</dbReference>
<dbReference type="PANTHER" id="PTHR30221">
    <property type="entry name" value="SMALL-CONDUCTANCE MECHANOSENSITIVE CHANNEL"/>
    <property type="match status" value="1"/>
</dbReference>
<dbReference type="PANTHER" id="PTHR30221:SF1">
    <property type="entry name" value="SMALL-CONDUCTANCE MECHANOSENSITIVE CHANNEL"/>
    <property type="match status" value="1"/>
</dbReference>
<dbReference type="Pfam" id="PF05552">
    <property type="entry name" value="MS_channel_1st_1"/>
    <property type="match status" value="5"/>
</dbReference>
<gene>
    <name type="primary">ygxB</name>
    <name type="ordered locus">BSU09390</name>
</gene>